<keyword id="KW-0012">Acyltransferase</keyword>
<keyword id="KW-1185">Reference proteome</keyword>
<keyword id="KW-0677">Repeat</keyword>
<keyword id="KW-0808">Transferase</keyword>
<reference key="1">
    <citation type="journal article" date="2008" name="PLoS ONE">
        <title>Survival in nuclear waste, extreme resistance, and potential applications gleaned from the genome sequence of Kineococcus radiotolerans SRS30216.</title>
        <authorList>
            <person name="Bagwell C.E."/>
            <person name="Bhat S."/>
            <person name="Hawkins G.M."/>
            <person name="Smith B.W."/>
            <person name="Biswas T."/>
            <person name="Hoover T.R."/>
            <person name="Saunders E."/>
            <person name="Han C.S."/>
            <person name="Tsodikov O.V."/>
            <person name="Shimkets L.J."/>
        </authorList>
    </citation>
    <scope>NUCLEOTIDE SEQUENCE [LARGE SCALE GENOMIC DNA]</scope>
    <source>
        <strain>ATCC BAA-149 / DSM 14245 / SRS30216</strain>
    </source>
</reference>
<protein>
    <recommendedName>
        <fullName evidence="1">Mycothiol acetyltransferase</fullName>
        <shortName evidence="1">MSH acetyltransferase</shortName>
        <ecNumber evidence="1">2.3.1.189</ecNumber>
    </recommendedName>
    <alternativeName>
        <fullName evidence="1">Mycothiol synthase</fullName>
    </alternativeName>
</protein>
<comment type="function">
    <text evidence="1">Catalyzes the transfer of acetyl from acetyl-CoA to desacetylmycothiol (Cys-GlcN-Ins) to form mycothiol.</text>
</comment>
<comment type="catalytic activity">
    <reaction evidence="1">
        <text>1D-myo-inositol 2-(L-cysteinylamino)-2-deoxy-alpha-D-glucopyranoside + acetyl-CoA = mycothiol + CoA + H(+)</text>
        <dbReference type="Rhea" id="RHEA:26172"/>
        <dbReference type="ChEBI" id="CHEBI:15378"/>
        <dbReference type="ChEBI" id="CHEBI:16768"/>
        <dbReference type="ChEBI" id="CHEBI:57287"/>
        <dbReference type="ChEBI" id="CHEBI:57288"/>
        <dbReference type="ChEBI" id="CHEBI:58887"/>
        <dbReference type="EC" id="2.3.1.189"/>
    </reaction>
</comment>
<comment type="subunit">
    <text evidence="1">Monomer.</text>
</comment>
<comment type="similarity">
    <text evidence="1">Belongs to the acetyltransferase family. MshD subfamily.</text>
</comment>
<organism>
    <name type="scientific">Kineococcus radiotolerans (strain ATCC BAA-149 / DSM 14245 / SRS30216)</name>
    <dbReference type="NCBI Taxonomy" id="266940"/>
    <lineage>
        <taxon>Bacteria</taxon>
        <taxon>Bacillati</taxon>
        <taxon>Actinomycetota</taxon>
        <taxon>Actinomycetes</taxon>
        <taxon>Kineosporiales</taxon>
        <taxon>Kineosporiaceae</taxon>
        <taxon>Kineococcus</taxon>
    </lineage>
</organism>
<evidence type="ECO:0000255" key="1">
    <source>
        <dbReference type="HAMAP-Rule" id="MF_01698"/>
    </source>
</evidence>
<gene>
    <name evidence="1" type="primary">mshD</name>
    <name type="ordered locus">Krad_0878</name>
</gene>
<sequence length="303" mass="31420">MSPAPAGATALPGPLPGDVHDAVLALAAAASRADGATSLSEDAVLRLRAGDGAVQHLVRHEDGVLAGYAQLVPSGDGEGDGFEGELLVHPGHRRRGHGGALLAAVEERAGARPVRLWSHGDTPGASALAARAGWTRARELLRMERTSAGLSDLAVPDLAAGLAVRPFVPGADDAAWVALNAAAFATHPEQGRWTLDDLRARLAEPWFDPALLLLAEAPDGLAAFCWMKVEDGLGELYVLGVDPARSGAGLGRALLVRGLRAVAGRVDRVDLYVDGDNLRAVRLYAGLGFSRAATDVQYASGPR</sequence>
<name>MSHD_KINRD</name>
<accession>A6W6C7</accession>
<feature type="chain" id="PRO_0000400261" description="Mycothiol acetyltransferase">
    <location>
        <begin position="1"/>
        <end position="303"/>
    </location>
</feature>
<feature type="domain" description="N-acetyltransferase 1" evidence="1">
    <location>
        <begin position="10"/>
        <end position="156"/>
    </location>
</feature>
<feature type="domain" description="N-acetyltransferase 2" evidence="1">
    <location>
        <begin position="162"/>
        <end position="303"/>
    </location>
</feature>
<feature type="binding site" evidence="1">
    <location>
        <position position="41"/>
    </location>
    <ligand>
        <name>1D-myo-inositol 2-(L-cysteinylamino)-2-deoxy-alpha-D-glucopyranoside</name>
        <dbReference type="ChEBI" id="CHEBI:58887"/>
    </ligand>
</feature>
<feature type="binding site" evidence="1">
    <location>
        <begin position="86"/>
        <end position="88"/>
    </location>
    <ligand>
        <name>acetyl-CoA</name>
        <dbReference type="ChEBI" id="CHEBI:57288"/>
        <label>1</label>
    </ligand>
</feature>
<feature type="binding site" evidence="1">
    <location>
        <position position="189"/>
    </location>
    <ligand>
        <name>1D-myo-inositol 2-(L-cysteinylamino)-2-deoxy-alpha-D-glucopyranoside</name>
        <dbReference type="ChEBI" id="CHEBI:58887"/>
    </ligand>
</feature>
<feature type="binding site" evidence="1">
    <location>
        <position position="228"/>
    </location>
    <ligand>
        <name>1D-myo-inositol 2-(L-cysteinylamino)-2-deoxy-alpha-D-glucopyranoside</name>
        <dbReference type="ChEBI" id="CHEBI:58887"/>
    </ligand>
</feature>
<feature type="binding site" evidence="1">
    <location>
        <position position="235"/>
    </location>
    <ligand>
        <name>1D-myo-inositol 2-(L-cysteinylamino)-2-deoxy-alpha-D-glucopyranoside</name>
        <dbReference type="ChEBI" id="CHEBI:58887"/>
    </ligand>
</feature>
<feature type="binding site" evidence="1">
    <location>
        <begin position="239"/>
        <end position="241"/>
    </location>
    <ligand>
        <name>acetyl-CoA</name>
        <dbReference type="ChEBI" id="CHEBI:57288"/>
        <label>2</label>
    </ligand>
</feature>
<feature type="binding site" evidence="1">
    <location>
        <begin position="246"/>
        <end position="252"/>
    </location>
    <ligand>
        <name>acetyl-CoA</name>
        <dbReference type="ChEBI" id="CHEBI:57288"/>
        <label>2</label>
    </ligand>
</feature>
<feature type="binding site" evidence="1">
    <location>
        <position position="272"/>
    </location>
    <ligand>
        <name>1D-myo-inositol 2-(L-cysteinylamino)-2-deoxy-alpha-D-glucopyranoside</name>
        <dbReference type="ChEBI" id="CHEBI:58887"/>
    </ligand>
</feature>
<feature type="binding site" evidence="1">
    <location>
        <begin position="277"/>
        <end position="282"/>
    </location>
    <ligand>
        <name>acetyl-CoA</name>
        <dbReference type="ChEBI" id="CHEBI:57288"/>
        <label>2</label>
    </ligand>
</feature>
<proteinExistence type="inferred from homology"/>
<dbReference type="EC" id="2.3.1.189" evidence="1"/>
<dbReference type="EMBL" id="CP000750">
    <property type="protein sequence ID" value="ABS02366.1"/>
    <property type="molecule type" value="Genomic_DNA"/>
</dbReference>
<dbReference type="RefSeq" id="WP_012084784.1">
    <property type="nucleotide sequence ID" value="NC_009664.2"/>
</dbReference>
<dbReference type="SMR" id="A6W6C7"/>
<dbReference type="STRING" id="266940.Krad_0878"/>
<dbReference type="KEGG" id="kra:Krad_0878"/>
<dbReference type="eggNOG" id="COG0456">
    <property type="taxonomic scope" value="Bacteria"/>
</dbReference>
<dbReference type="HOGENOM" id="CLU_068014_0_0_11"/>
<dbReference type="Proteomes" id="UP000001116">
    <property type="component" value="Chromosome"/>
</dbReference>
<dbReference type="GO" id="GO:0035447">
    <property type="term" value="F:mycothiol synthase activity"/>
    <property type="evidence" value="ECO:0007669"/>
    <property type="project" value="UniProtKB-UniRule"/>
</dbReference>
<dbReference type="GO" id="GO:0010125">
    <property type="term" value="P:mycothiol biosynthetic process"/>
    <property type="evidence" value="ECO:0007669"/>
    <property type="project" value="UniProtKB-UniRule"/>
</dbReference>
<dbReference type="CDD" id="cd04301">
    <property type="entry name" value="NAT_SF"/>
    <property type="match status" value="1"/>
</dbReference>
<dbReference type="Gene3D" id="3.40.630.30">
    <property type="match status" value="1"/>
</dbReference>
<dbReference type="HAMAP" id="MF_01698">
    <property type="entry name" value="MshD"/>
    <property type="match status" value="1"/>
</dbReference>
<dbReference type="InterPro" id="IPR016181">
    <property type="entry name" value="Acyl_CoA_acyltransferase"/>
</dbReference>
<dbReference type="InterPro" id="IPR050832">
    <property type="entry name" value="Bact_Acetyltransf"/>
</dbReference>
<dbReference type="InterPro" id="IPR000182">
    <property type="entry name" value="GNAT_dom"/>
</dbReference>
<dbReference type="InterPro" id="IPR017813">
    <property type="entry name" value="Mycothiol_AcTrfase"/>
</dbReference>
<dbReference type="NCBIfam" id="TIGR03448">
    <property type="entry name" value="mycothiol_MshD"/>
    <property type="match status" value="1"/>
</dbReference>
<dbReference type="PANTHER" id="PTHR43877:SF1">
    <property type="entry name" value="ACETYLTRANSFERASE"/>
    <property type="match status" value="1"/>
</dbReference>
<dbReference type="PANTHER" id="PTHR43877">
    <property type="entry name" value="AMINOALKYLPHOSPHONATE N-ACETYLTRANSFERASE-RELATED-RELATED"/>
    <property type="match status" value="1"/>
</dbReference>
<dbReference type="Pfam" id="PF00583">
    <property type="entry name" value="Acetyltransf_1"/>
    <property type="match status" value="2"/>
</dbReference>
<dbReference type="PIRSF" id="PIRSF021524">
    <property type="entry name" value="MSH_acetyltransferase"/>
    <property type="match status" value="1"/>
</dbReference>
<dbReference type="SUPFAM" id="SSF55729">
    <property type="entry name" value="Acyl-CoA N-acyltransferases (Nat)"/>
    <property type="match status" value="1"/>
</dbReference>
<dbReference type="PROSITE" id="PS51186">
    <property type="entry name" value="GNAT"/>
    <property type="match status" value="2"/>
</dbReference>